<name>Y1562_RICRO</name>
<feature type="chain" id="PRO_1000078768" description="Nucleoid-associated protein RrIowa_1562">
    <location>
        <begin position="1"/>
        <end position="107"/>
    </location>
</feature>
<comment type="function">
    <text evidence="1">Binds to DNA and alters its conformation. May be involved in regulation of gene expression, nucleoid organization and DNA protection.</text>
</comment>
<comment type="subunit">
    <text evidence="1">Homodimer.</text>
</comment>
<comment type="subcellular location">
    <subcellularLocation>
        <location evidence="1">Cytoplasm</location>
        <location evidence="1">Nucleoid</location>
    </subcellularLocation>
</comment>
<comment type="similarity">
    <text evidence="1">Belongs to the YbaB/EbfC family.</text>
</comment>
<reference key="1">
    <citation type="journal article" date="2008" name="Infect. Immun.">
        <title>Genomic comparison of virulent Rickettsia rickettsii Sheila Smith and avirulent Rickettsia rickettsii Iowa.</title>
        <authorList>
            <person name="Ellison D.W."/>
            <person name="Clark T.R."/>
            <person name="Sturdevant D.E."/>
            <person name="Virtaneva K."/>
            <person name="Porcella S.F."/>
            <person name="Hackstadt T."/>
        </authorList>
    </citation>
    <scope>NUCLEOTIDE SEQUENCE [LARGE SCALE GENOMIC DNA]</scope>
    <source>
        <strain>Iowa</strain>
    </source>
</reference>
<organism>
    <name type="scientific">Rickettsia rickettsii (strain Iowa)</name>
    <dbReference type="NCBI Taxonomy" id="452659"/>
    <lineage>
        <taxon>Bacteria</taxon>
        <taxon>Pseudomonadati</taxon>
        <taxon>Pseudomonadota</taxon>
        <taxon>Alphaproteobacteria</taxon>
        <taxon>Rickettsiales</taxon>
        <taxon>Rickettsiaceae</taxon>
        <taxon>Rickettsieae</taxon>
        <taxon>Rickettsia</taxon>
        <taxon>spotted fever group</taxon>
    </lineage>
</organism>
<proteinExistence type="inferred from homology"/>
<evidence type="ECO:0000255" key="1">
    <source>
        <dbReference type="HAMAP-Rule" id="MF_00274"/>
    </source>
</evidence>
<gene>
    <name type="ordered locus">RrIowa_1562</name>
</gene>
<dbReference type="EMBL" id="CP000766">
    <property type="protein sequence ID" value="ABY73279.1"/>
    <property type="molecule type" value="Genomic_DNA"/>
</dbReference>
<dbReference type="RefSeq" id="WP_012151438.1">
    <property type="nucleotide sequence ID" value="NC_010263.3"/>
</dbReference>
<dbReference type="SMR" id="B0BVL9"/>
<dbReference type="KEGG" id="rrj:RrIowa_1562"/>
<dbReference type="eggNOG" id="COG0718">
    <property type="taxonomic scope" value="Bacteria"/>
</dbReference>
<dbReference type="HOGENOM" id="CLU_140930_0_0_5"/>
<dbReference type="Proteomes" id="UP000000796">
    <property type="component" value="Chromosome"/>
</dbReference>
<dbReference type="GO" id="GO:0043590">
    <property type="term" value="C:bacterial nucleoid"/>
    <property type="evidence" value="ECO:0007669"/>
    <property type="project" value="UniProtKB-UniRule"/>
</dbReference>
<dbReference type="GO" id="GO:0005829">
    <property type="term" value="C:cytosol"/>
    <property type="evidence" value="ECO:0007669"/>
    <property type="project" value="TreeGrafter"/>
</dbReference>
<dbReference type="GO" id="GO:0003677">
    <property type="term" value="F:DNA binding"/>
    <property type="evidence" value="ECO:0007669"/>
    <property type="project" value="UniProtKB-UniRule"/>
</dbReference>
<dbReference type="Gene3D" id="3.30.1310.10">
    <property type="entry name" value="Nucleoid-associated protein YbaB-like domain"/>
    <property type="match status" value="1"/>
</dbReference>
<dbReference type="HAMAP" id="MF_00274">
    <property type="entry name" value="DNA_YbaB_EbfC"/>
    <property type="match status" value="1"/>
</dbReference>
<dbReference type="InterPro" id="IPR036894">
    <property type="entry name" value="YbaB-like_sf"/>
</dbReference>
<dbReference type="InterPro" id="IPR004401">
    <property type="entry name" value="YbaB/EbfC"/>
</dbReference>
<dbReference type="NCBIfam" id="TIGR00103">
    <property type="entry name" value="DNA_YbaB_EbfC"/>
    <property type="match status" value="1"/>
</dbReference>
<dbReference type="PANTHER" id="PTHR33449">
    <property type="entry name" value="NUCLEOID-ASSOCIATED PROTEIN YBAB"/>
    <property type="match status" value="1"/>
</dbReference>
<dbReference type="PANTHER" id="PTHR33449:SF1">
    <property type="entry name" value="NUCLEOID-ASSOCIATED PROTEIN YBAB"/>
    <property type="match status" value="1"/>
</dbReference>
<dbReference type="Pfam" id="PF02575">
    <property type="entry name" value="YbaB_DNA_bd"/>
    <property type="match status" value="1"/>
</dbReference>
<dbReference type="PIRSF" id="PIRSF004555">
    <property type="entry name" value="UCP004555"/>
    <property type="match status" value="1"/>
</dbReference>
<dbReference type="SUPFAM" id="SSF82607">
    <property type="entry name" value="YbaB-like"/>
    <property type="match status" value="1"/>
</dbReference>
<sequence length="107" mass="11829">MVNFNQFLKQAQSMQKKMQEAQEQMANARYTGKAGGGLVEVIATGKGEVEKISIDESLLKAEEKEMLEDLIKVAFNNAQQKCDEDSQNSLSGALNGMRLPPGFKMPF</sequence>
<protein>
    <recommendedName>
        <fullName evidence="1">Nucleoid-associated protein RrIowa_1562</fullName>
    </recommendedName>
</protein>
<accession>B0BVL9</accession>
<keyword id="KW-0963">Cytoplasm</keyword>
<keyword id="KW-0238">DNA-binding</keyword>